<gene>
    <name evidence="1" type="primary">minC</name>
    <name type="ordered locus">YPO2078</name>
    <name type="ordered locus">y2232</name>
    <name type="ordered locus">YP_1921</name>
</gene>
<reference key="1">
    <citation type="journal article" date="2001" name="Nature">
        <title>Genome sequence of Yersinia pestis, the causative agent of plague.</title>
        <authorList>
            <person name="Parkhill J."/>
            <person name="Wren B.W."/>
            <person name="Thomson N.R."/>
            <person name="Titball R.W."/>
            <person name="Holden M.T.G."/>
            <person name="Prentice M.B."/>
            <person name="Sebaihia M."/>
            <person name="James K.D."/>
            <person name="Churcher C.M."/>
            <person name="Mungall K.L."/>
            <person name="Baker S."/>
            <person name="Basham D."/>
            <person name="Bentley S.D."/>
            <person name="Brooks K."/>
            <person name="Cerdeno-Tarraga A.-M."/>
            <person name="Chillingworth T."/>
            <person name="Cronin A."/>
            <person name="Davies R.M."/>
            <person name="Davis P."/>
            <person name="Dougan G."/>
            <person name="Feltwell T."/>
            <person name="Hamlin N."/>
            <person name="Holroyd S."/>
            <person name="Jagels K."/>
            <person name="Karlyshev A.V."/>
            <person name="Leather S."/>
            <person name="Moule S."/>
            <person name="Oyston P.C.F."/>
            <person name="Quail M.A."/>
            <person name="Rutherford K.M."/>
            <person name="Simmonds M."/>
            <person name="Skelton J."/>
            <person name="Stevens K."/>
            <person name="Whitehead S."/>
            <person name="Barrell B.G."/>
        </authorList>
    </citation>
    <scope>NUCLEOTIDE SEQUENCE [LARGE SCALE GENOMIC DNA]</scope>
    <source>
        <strain>CO-92 / Biovar Orientalis</strain>
    </source>
</reference>
<reference key="2">
    <citation type="journal article" date="2002" name="J. Bacteriol.">
        <title>Genome sequence of Yersinia pestis KIM.</title>
        <authorList>
            <person name="Deng W."/>
            <person name="Burland V."/>
            <person name="Plunkett G. III"/>
            <person name="Boutin A."/>
            <person name="Mayhew G.F."/>
            <person name="Liss P."/>
            <person name="Perna N.T."/>
            <person name="Rose D.J."/>
            <person name="Mau B."/>
            <person name="Zhou S."/>
            <person name="Schwartz D.C."/>
            <person name="Fetherston J.D."/>
            <person name="Lindler L.E."/>
            <person name="Brubaker R.R."/>
            <person name="Plano G.V."/>
            <person name="Straley S.C."/>
            <person name="McDonough K.A."/>
            <person name="Nilles M.L."/>
            <person name="Matson J.S."/>
            <person name="Blattner F.R."/>
            <person name="Perry R.D."/>
        </authorList>
    </citation>
    <scope>NUCLEOTIDE SEQUENCE [LARGE SCALE GENOMIC DNA]</scope>
    <source>
        <strain>KIM10+ / Biovar Mediaevalis</strain>
    </source>
</reference>
<reference key="3">
    <citation type="journal article" date="2004" name="DNA Res.">
        <title>Complete genome sequence of Yersinia pestis strain 91001, an isolate avirulent to humans.</title>
        <authorList>
            <person name="Song Y."/>
            <person name="Tong Z."/>
            <person name="Wang J."/>
            <person name="Wang L."/>
            <person name="Guo Z."/>
            <person name="Han Y."/>
            <person name="Zhang J."/>
            <person name="Pei D."/>
            <person name="Zhou D."/>
            <person name="Qin H."/>
            <person name="Pang X."/>
            <person name="Han Y."/>
            <person name="Zhai J."/>
            <person name="Li M."/>
            <person name="Cui B."/>
            <person name="Qi Z."/>
            <person name="Jin L."/>
            <person name="Dai R."/>
            <person name="Chen F."/>
            <person name="Li S."/>
            <person name="Ye C."/>
            <person name="Du Z."/>
            <person name="Lin W."/>
            <person name="Wang J."/>
            <person name="Yu J."/>
            <person name="Yang H."/>
            <person name="Wang J."/>
            <person name="Huang P."/>
            <person name="Yang R."/>
        </authorList>
    </citation>
    <scope>NUCLEOTIDE SEQUENCE [LARGE SCALE GENOMIC DNA]</scope>
    <source>
        <strain>91001 / Biovar Mediaevalis</strain>
    </source>
</reference>
<organism>
    <name type="scientific">Yersinia pestis</name>
    <dbReference type="NCBI Taxonomy" id="632"/>
    <lineage>
        <taxon>Bacteria</taxon>
        <taxon>Pseudomonadati</taxon>
        <taxon>Pseudomonadota</taxon>
        <taxon>Gammaproteobacteria</taxon>
        <taxon>Enterobacterales</taxon>
        <taxon>Yersiniaceae</taxon>
        <taxon>Yersinia</taxon>
    </lineage>
</organism>
<dbReference type="EMBL" id="AL590842">
    <property type="protein sequence ID" value="CAL20713.1"/>
    <property type="molecule type" value="Genomic_DNA"/>
</dbReference>
<dbReference type="EMBL" id="AE009952">
    <property type="protein sequence ID" value="AAM85792.1"/>
    <property type="molecule type" value="Genomic_DNA"/>
</dbReference>
<dbReference type="EMBL" id="AE017042">
    <property type="protein sequence ID" value="AAS62139.1"/>
    <property type="molecule type" value="Genomic_DNA"/>
</dbReference>
<dbReference type="PIR" id="AF0253">
    <property type="entry name" value="AF0253"/>
</dbReference>
<dbReference type="RefSeq" id="WP_002220631.1">
    <property type="nucleotide sequence ID" value="NZ_WUCM01000062.1"/>
</dbReference>
<dbReference type="RefSeq" id="YP_002347060.1">
    <property type="nucleotide sequence ID" value="NC_003143.1"/>
</dbReference>
<dbReference type="SMR" id="Q8ZES5"/>
<dbReference type="STRING" id="214092.YPO2078"/>
<dbReference type="PaxDb" id="214092-YPO2078"/>
<dbReference type="DNASU" id="1147179"/>
<dbReference type="EnsemblBacteria" id="AAS62139">
    <property type="protein sequence ID" value="AAS62139"/>
    <property type="gene ID" value="YP_1921"/>
</dbReference>
<dbReference type="GeneID" id="96665552"/>
<dbReference type="KEGG" id="ype:YPO2078"/>
<dbReference type="KEGG" id="ypk:y2232"/>
<dbReference type="KEGG" id="ypm:YP_1921"/>
<dbReference type="PATRIC" id="fig|214092.21.peg.2468"/>
<dbReference type="eggNOG" id="COG0850">
    <property type="taxonomic scope" value="Bacteria"/>
</dbReference>
<dbReference type="HOGENOM" id="CLU_067812_0_1_6"/>
<dbReference type="OMA" id="RRDPLWG"/>
<dbReference type="OrthoDB" id="9794530at2"/>
<dbReference type="Proteomes" id="UP000000815">
    <property type="component" value="Chromosome"/>
</dbReference>
<dbReference type="Proteomes" id="UP000001019">
    <property type="component" value="Chromosome"/>
</dbReference>
<dbReference type="Proteomes" id="UP000002490">
    <property type="component" value="Chromosome"/>
</dbReference>
<dbReference type="GO" id="GO:0000902">
    <property type="term" value="P:cell morphogenesis"/>
    <property type="evidence" value="ECO:0007669"/>
    <property type="project" value="InterPro"/>
</dbReference>
<dbReference type="GO" id="GO:0000917">
    <property type="term" value="P:division septum assembly"/>
    <property type="evidence" value="ECO:0007669"/>
    <property type="project" value="UniProtKB-KW"/>
</dbReference>
<dbReference type="GO" id="GO:0051302">
    <property type="term" value="P:regulation of cell division"/>
    <property type="evidence" value="ECO:0007669"/>
    <property type="project" value="InterPro"/>
</dbReference>
<dbReference type="GO" id="GO:1901891">
    <property type="term" value="P:regulation of cell septum assembly"/>
    <property type="evidence" value="ECO:0007669"/>
    <property type="project" value="InterPro"/>
</dbReference>
<dbReference type="FunFam" id="2.160.20.70:FF:000002">
    <property type="entry name" value="Probable septum site-determining protein MinC"/>
    <property type="match status" value="1"/>
</dbReference>
<dbReference type="Gene3D" id="2.160.20.70">
    <property type="match status" value="1"/>
</dbReference>
<dbReference type="Gene3D" id="3.30.70.260">
    <property type="match status" value="1"/>
</dbReference>
<dbReference type="HAMAP" id="MF_00267">
    <property type="entry name" value="MinC"/>
    <property type="match status" value="1"/>
</dbReference>
<dbReference type="InterPro" id="IPR016098">
    <property type="entry name" value="CAP/MinC_C"/>
</dbReference>
<dbReference type="InterPro" id="IPR013033">
    <property type="entry name" value="MinC"/>
</dbReference>
<dbReference type="InterPro" id="IPR036145">
    <property type="entry name" value="MinC_C_sf"/>
</dbReference>
<dbReference type="InterPro" id="IPR007874">
    <property type="entry name" value="MinC_N"/>
</dbReference>
<dbReference type="InterPro" id="IPR005526">
    <property type="entry name" value="Septum_form_inhib_MinC_C"/>
</dbReference>
<dbReference type="NCBIfam" id="TIGR01222">
    <property type="entry name" value="minC"/>
    <property type="match status" value="1"/>
</dbReference>
<dbReference type="PANTHER" id="PTHR34108">
    <property type="entry name" value="SEPTUM SITE-DETERMINING PROTEIN MINC"/>
    <property type="match status" value="1"/>
</dbReference>
<dbReference type="PANTHER" id="PTHR34108:SF1">
    <property type="entry name" value="SEPTUM SITE-DETERMINING PROTEIN MINC"/>
    <property type="match status" value="1"/>
</dbReference>
<dbReference type="Pfam" id="PF03775">
    <property type="entry name" value="MinC_C"/>
    <property type="match status" value="1"/>
</dbReference>
<dbReference type="Pfam" id="PF05209">
    <property type="entry name" value="MinC_N"/>
    <property type="match status" value="1"/>
</dbReference>
<dbReference type="SUPFAM" id="SSF63848">
    <property type="entry name" value="Cell-division inhibitor MinC, C-terminal domain"/>
    <property type="match status" value="1"/>
</dbReference>
<sequence length="228" mass="24546">MSQSPIELKGSSFTLSVVHLHDSRPEVIRQALQEKVDQAPAFLKNAPVVINVATLPNGANWKDLQQAVTSAGLRIVGISGCQDERQKRAIARAGLPLLSEGKGQKLAPEPVISPPENVPTQTRIINTPVRSGQQIYARNCDLIVISSVSAGAELIADGNIHIYGMMRGRALAGASGDAKCQIFCTHLGAELVSIAGQYWLSDQIPLEYFGQAARLYLQDNTLTIQPLN</sequence>
<name>MINC_YERPE</name>
<keyword id="KW-0131">Cell cycle</keyword>
<keyword id="KW-0132">Cell division</keyword>
<keyword id="KW-1185">Reference proteome</keyword>
<keyword id="KW-0717">Septation</keyword>
<evidence type="ECO:0000255" key="1">
    <source>
        <dbReference type="HAMAP-Rule" id="MF_00267"/>
    </source>
</evidence>
<accession>Q8ZES5</accession>
<accession>Q0WF78</accession>
<feature type="chain" id="PRO_0000189077" description="Septum site-determining protein MinC">
    <location>
        <begin position="1"/>
        <end position="228"/>
    </location>
</feature>
<protein>
    <recommendedName>
        <fullName>Septum site-determining protein MinC</fullName>
    </recommendedName>
</protein>
<proteinExistence type="inferred from homology"/>
<comment type="function">
    <text evidence="1">Cell division inhibitor that blocks the formation of polar Z ring septums. Rapidly oscillates between the poles of the cell to destabilize FtsZ filaments that have formed before they mature into polar Z rings. Prevents FtsZ polymerization.</text>
</comment>
<comment type="subunit">
    <text evidence="1">Interacts with MinD and FtsZ.</text>
</comment>
<comment type="similarity">
    <text evidence="1">Belongs to the MinC family.</text>
</comment>